<organism>
    <name type="scientific">Yersinia enterocolitica serotype O:8 / biotype 1B (strain NCTC 13174 / 8081)</name>
    <dbReference type="NCBI Taxonomy" id="393305"/>
    <lineage>
        <taxon>Bacteria</taxon>
        <taxon>Pseudomonadati</taxon>
        <taxon>Pseudomonadota</taxon>
        <taxon>Gammaproteobacteria</taxon>
        <taxon>Enterobacterales</taxon>
        <taxon>Yersiniaceae</taxon>
        <taxon>Yersinia</taxon>
    </lineage>
</organism>
<sequence>MDAITINSLFLIGAVLVGASILLSSLSSRLGIPILVIFLAIGMLAGTDGIGGIAFDNYPVAYLVSNLALAVILLDGGMRTRASSFRVALWPALSLATVGVLITAGLTGLAAAWLFDLDIIQGLLIGAIIGSTDAAAVFSLLGGKGLNERVSATLEIESGSNDPMAVFLTITLISMISAGESSLSWMFLVHLIQQFGLGIIIGLGGGSLLLLLINRIELPSGLYPLLAVSGGILVFSLTTAMNGSGILAVYLCGLMLGNRPIRNRAGILQTFDGLAWLSQIGMFLVLGLLLNPSELLPIAIPALILSLWMILFARPLSVFIGLLPFPSFNLRERIFISWVGLRGAVPVILAVFPMMAGIPHANLFFNVAFFVVLVSLLLQGTSLSFAARKTKLVVPPALAPVARIGLDIDKNNQWEQFIYQLSSDKWCIGAALRDLKMPQETRIAALFRGKDLLHPNGNTRLKEGDILCVIGQEHHLPALGKLFSQSPSIQLDERFFGDFILDADAKLDDISQIYGLNLEQGVDKQQTLGQFVLYLFGGEPVIGDQIEWDGLTWTIAEMESDRVSRVGVKIVTDKA</sequence>
<comment type="function">
    <text evidence="1">K(+)/H(+) antiporter that extrudes potassium in exchange for external protons and maintains the internal concentration of potassium under toxic levels.</text>
</comment>
<comment type="catalytic activity">
    <reaction evidence="1">
        <text>K(+)(in) + H(+)(out) = K(+)(out) + H(+)(in)</text>
        <dbReference type="Rhea" id="RHEA:29467"/>
        <dbReference type="ChEBI" id="CHEBI:15378"/>
        <dbReference type="ChEBI" id="CHEBI:29103"/>
    </reaction>
    <physiologicalReaction direction="left-to-right" evidence="1">
        <dbReference type="Rhea" id="RHEA:29468"/>
    </physiologicalReaction>
</comment>
<comment type="subcellular location">
    <subcellularLocation>
        <location evidence="1">Cell inner membrane</location>
        <topology evidence="1">Multi-pass membrane protein</topology>
    </subcellularLocation>
</comment>
<comment type="similarity">
    <text evidence="1">Belongs to the monovalent cation:proton antiporter 1 (CPA1) transporter (TC 2.A.36) family. NhaP2 subfamily.</text>
</comment>
<proteinExistence type="inferred from homology"/>
<evidence type="ECO:0000255" key="1">
    <source>
        <dbReference type="HAMAP-Rule" id="MF_01075"/>
    </source>
</evidence>
<feature type="chain" id="PRO_1000064677" description="K(+)/H(+) antiporter NhaP2">
    <location>
        <begin position="1"/>
        <end position="575"/>
    </location>
</feature>
<feature type="transmembrane region" description="Helical" evidence="1">
    <location>
        <begin position="3"/>
        <end position="23"/>
    </location>
</feature>
<feature type="transmembrane region" description="Helical" evidence="1">
    <location>
        <begin position="30"/>
        <end position="50"/>
    </location>
</feature>
<feature type="transmembrane region" description="Helical" evidence="1">
    <location>
        <begin position="58"/>
        <end position="78"/>
    </location>
</feature>
<feature type="transmembrane region" description="Helical" evidence="1">
    <location>
        <begin position="95"/>
        <end position="115"/>
    </location>
</feature>
<feature type="transmembrane region" description="Helical" evidence="1">
    <location>
        <begin position="122"/>
        <end position="142"/>
    </location>
</feature>
<feature type="transmembrane region" description="Helical" evidence="1">
    <location>
        <begin position="172"/>
        <end position="192"/>
    </location>
</feature>
<feature type="transmembrane region" description="Helical" evidence="1">
    <location>
        <begin position="194"/>
        <end position="214"/>
    </location>
</feature>
<feature type="transmembrane region" description="Helical" evidence="1">
    <location>
        <begin position="221"/>
        <end position="241"/>
    </location>
</feature>
<feature type="transmembrane region" description="Helical" evidence="1">
    <location>
        <begin position="270"/>
        <end position="290"/>
    </location>
</feature>
<feature type="transmembrane region" description="Helical" evidence="1">
    <location>
        <begin position="293"/>
        <end position="313"/>
    </location>
</feature>
<feature type="transmembrane region" description="Helical" evidence="1">
    <location>
        <begin position="334"/>
        <end position="354"/>
    </location>
</feature>
<feature type="transmembrane region" description="Helical" evidence="1">
    <location>
        <begin position="358"/>
        <end position="378"/>
    </location>
</feature>
<feature type="domain" description="RCK C-terminal" evidence="1">
    <location>
        <begin position="403"/>
        <end position="485"/>
    </location>
</feature>
<gene>
    <name evidence="1" type="primary">nhaP2</name>
    <name type="synonym">cvrA</name>
    <name type="ordered locus">YE1602</name>
</gene>
<keyword id="KW-0050">Antiport</keyword>
<keyword id="KW-0997">Cell inner membrane</keyword>
<keyword id="KW-1003">Cell membrane</keyword>
<keyword id="KW-0406">Ion transport</keyword>
<keyword id="KW-0472">Membrane</keyword>
<keyword id="KW-0630">Potassium</keyword>
<keyword id="KW-0633">Potassium transport</keyword>
<keyword id="KW-0812">Transmembrane</keyword>
<keyword id="KW-1133">Transmembrane helix</keyword>
<keyword id="KW-0813">Transport</keyword>
<accession>A1JMY5</accession>
<dbReference type="EMBL" id="AM286415">
    <property type="protein sequence ID" value="CAL11679.1"/>
    <property type="molecule type" value="Genomic_DNA"/>
</dbReference>
<dbReference type="RefSeq" id="WP_005170818.1">
    <property type="nucleotide sequence ID" value="NC_008800.1"/>
</dbReference>
<dbReference type="RefSeq" id="YP_001005894.1">
    <property type="nucleotide sequence ID" value="NC_008800.1"/>
</dbReference>
<dbReference type="SMR" id="A1JMY5"/>
<dbReference type="KEGG" id="yen:YE1602"/>
<dbReference type="PATRIC" id="fig|393305.7.peg.1733"/>
<dbReference type="eggNOG" id="COG3263">
    <property type="taxonomic scope" value="Bacteria"/>
</dbReference>
<dbReference type="HOGENOM" id="CLU_005912_9_2_6"/>
<dbReference type="OrthoDB" id="9810759at2"/>
<dbReference type="Proteomes" id="UP000000642">
    <property type="component" value="Chromosome"/>
</dbReference>
<dbReference type="GO" id="GO:0005886">
    <property type="term" value="C:plasma membrane"/>
    <property type="evidence" value="ECO:0007669"/>
    <property type="project" value="UniProtKB-SubCell"/>
</dbReference>
<dbReference type="GO" id="GO:0050660">
    <property type="term" value="F:flavin adenine dinucleotide binding"/>
    <property type="evidence" value="ECO:0007669"/>
    <property type="project" value="InterPro"/>
</dbReference>
<dbReference type="GO" id="GO:0015386">
    <property type="term" value="F:potassium:proton antiporter activity"/>
    <property type="evidence" value="ECO:0007669"/>
    <property type="project" value="UniProtKB-UniRule"/>
</dbReference>
<dbReference type="GO" id="GO:0006884">
    <property type="term" value="P:cell volume homeostasis"/>
    <property type="evidence" value="ECO:0007669"/>
    <property type="project" value="InterPro"/>
</dbReference>
<dbReference type="Gene3D" id="1.20.1530.20">
    <property type="match status" value="1"/>
</dbReference>
<dbReference type="Gene3D" id="3.30.465.10">
    <property type="match status" value="1"/>
</dbReference>
<dbReference type="Gene3D" id="3.30.70.1450">
    <property type="entry name" value="Regulator of K+ conductance, C-terminal domain"/>
    <property type="match status" value="1"/>
</dbReference>
<dbReference type="HAMAP" id="MF_01075">
    <property type="entry name" value="NhaP2"/>
    <property type="match status" value="1"/>
</dbReference>
<dbReference type="InterPro" id="IPR006153">
    <property type="entry name" value="Cation/H_exchanger_TM"/>
</dbReference>
<dbReference type="InterPro" id="IPR036318">
    <property type="entry name" value="FAD-bd_PCMH-like_sf"/>
</dbReference>
<dbReference type="InterPro" id="IPR016169">
    <property type="entry name" value="FAD-bd_PCMH_sub2"/>
</dbReference>
<dbReference type="InterPro" id="IPR038770">
    <property type="entry name" value="Na+/solute_symporter_sf"/>
</dbReference>
<dbReference type="InterPro" id="IPR023729">
    <property type="entry name" value="NhaP2"/>
</dbReference>
<dbReference type="InterPro" id="IPR006037">
    <property type="entry name" value="RCK_C"/>
</dbReference>
<dbReference type="InterPro" id="IPR036721">
    <property type="entry name" value="RCK_C_sf"/>
</dbReference>
<dbReference type="InterPro" id="IPR005170">
    <property type="entry name" value="Transptr-assoc_dom"/>
</dbReference>
<dbReference type="NCBIfam" id="NF003714">
    <property type="entry name" value="PRK05326.1-1"/>
    <property type="match status" value="1"/>
</dbReference>
<dbReference type="NCBIfam" id="NF003715">
    <property type="entry name" value="PRK05326.1-2"/>
    <property type="match status" value="1"/>
</dbReference>
<dbReference type="NCBIfam" id="NF003716">
    <property type="entry name" value="PRK05326.1-3"/>
    <property type="match status" value="1"/>
</dbReference>
<dbReference type="PANTHER" id="PTHR32507:SF7">
    <property type="entry name" value="K(+)_H(+) ANTIPORTER NHAP2"/>
    <property type="match status" value="1"/>
</dbReference>
<dbReference type="PANTHER" id="PTHR32507">
    <property type="entry name" value="NA(+)/H(+) ANTIPORTER 1"/>
    <property type="match status" value="1"/>
</dbReference>
<dbReference type="Pfam" id="PF03471">
    <property type="entry name" value="CorC_HlyC"/>
    <property type="match status" value="1"/>
</dbReference>
<dbReference type="Pfam" id="PF00999">
    <property type="entry name" value="Na_H_Exchanger"/>
    <property type="match status" value="1"/>
</dbReference>
<dbReference type="Pfam" id="PF02080">
    <property type="entry name" value="TrkA_C"/>
    <property type="match status" value="1"/>
</dbReference>
<dbReference type="SMART" id="SM01091">
    <property type="entry name" value="CorC_HlyC"/>
    <property type="match status" value="1"/>
</dbReference>
<dbReference type="SUPFAM" id="SSF56176">
    <property type="entry name" value="FAD-binding/transporter-associated domain-like"/>
    <property type="match status" value="1"/>
</dbReference>
<dbReference type="SUPFAM" id="SSF116726">
    <property type="entry name" value="TrkA C-terminal domain-like"/>
    <property type="match status" value="1"/>
</dbReference>
<dbReference type="PROSITE" id="PS51202">
    <property type="entry name" value="RCK_C"/>
    <property type="match status" value="1"/>
</dbReference>
<name>NHAP2_YERE8</name>
<protein>
    <recommendedName>
        <fullName evidence="1">K(+)/H(+) antiporter NhaP2</fullName>
    </recommendedName>
    <alternativeName>
        <fullName evidence="1">Potassium/proton antiporter NhaP2</fullName>
    </alternativeName>
</protein>
<reference key="1">
    <citation type="journal article" date="2006" name="PLoS Genet.">
        <title>The complete genome sequence and comparative genome analysis of the high pathogenicity Yersinia enterocolitica strain 8081.</title>
        <authorList>
            <person name="Thomson N.R."/>
            <person name="Howard S."/>
            <person name="Wren B.W."/>
            <person name="Holden M.T.G."/>
            <person name="Crossman L."/>
            <person name="Challis G.L."/>
            <person name="Churcher C."/>
            <person name="Mungall K."/>
            <person name="Brooks K."/>
            <person name="Chillingworth T."/>
            <person name="Feltwell T."/>
            <person name="Abdellah Z."/>
            <person name="Hauser H."/>
            <person name="Jagels K."/>
            <person name="Maddison M."/>
            <person name="Moule S."/>
            <person name="Sanders M."/>
            <person name="Whitehead S."/>
            <person name="Quail M.A."/>
            <person name="Dougan G."/>
            <person name="Parkhill J."/>
            <person name="Prentice M.B."/>
        </authorList>
    </citation>
    <scope>NUCLEOTIDE SEQUENCE [LARGE SCALE GENOMIC DNA]</scope>
    <source>
        <strain>NCTC 13174 / 8081</strain>
    </source>
</reference>